<proteinExistence type="inferred from homology"/>
<sequence length="296" mass="31535">MPHTLLILNGKESGNPEVREAVKNVRDEGLTLHVRITWEHGDAKRYVEEAATLAVSTVIAGGGDGTINEVATALMSLPADKRPCLGILPLGTANDFATGCNIPLQIENALQLAVKGRAVAIDLAQVNGEHYFINMATGGFGTRITTETPDKLKAALGGVSYFIHGLMRLDALKADSCKIHGPDFHWSGDALVIGIGNGKQAGGGQLLCPDALINDGLMQLRLLTAKELLPAVLSTLFNGEKNKNVIDATVPWLDITAPNDITFNLDGEPLSGRHFHIEILPHAIQCRLPPNCPLLG</sequence>
<reference key="1">
    <citation type="journal article" date="2002" name="J. Bacteriol.">
        <title>Genome sequence of Yersinia pestis KIM.</title>
        <authorList>
            <person name="Deng W."/>
            <person name="Burland V."/>
            <person name="Plunkett G. III"/>
            <person name="Boutin A."/>
            <person name="Mayhew G.F."/>
            <person name="Liss P."/>
            <person name="Perna N.T."/>
            <person name="Rose D.J."/>
            <person name="Mau B."/>
            <person name="Zhou S."/>
            <person name="Schwartz D.C."/>
            <person name="Fetherston J.D."/>
            <person name="Lindler L.E."/>
            <person name="Brubaker R.R."/>
            <person name="Plano G.V."/>
            <person name="Straley S.C."/>
            <person name="McDonough K.A."/>
            <person name="Nilles M.L."/>
            <person name="Matson J.S."/>
            <person name="Blattner F.R."/>
            <person name="Perry R.D."/>
        </authorList>
    </citation>
    <scope>NUCLEOTIDE SEQUENCE [LARGE SCALE GENOMIC DNA]</scope>
    <source>
        <strain>KIM10+ / Biovar Mediaevalis</strain>
    </source>
</reference>
<reference key="2">
    <citation type="journal article" date="2001" name="Nature">
        <title>Genome sequence of Yersinia pestis, the causative agent of plague.</title>
        <authorList>
            <person name="Parkhill J."/>
            <person name="Wren B.W."/>
            <person name="Thomson N.R."/>
            <person name="Titball R.W."/>
            <person name="Holden M.T.G."/>
            <person name="Prentice M.B."/>
            <person name="Sebaihia M."/>
            <person name="James K.D."/>
            <person name="Churcher C.M."/>
            <person name="Mungall K.L."/>
            <person name="Baker S."/>
            <person name="Basham D."/>
            <person name="Bentley S.D."/>
            <person name="Brooks K."/>
            <person name="Cerdeno-Tarraga A.-M."/>
            <person name="Chillingworth T."/>
            <person name="Cronin A."/>
            <person name="Davies R.M."/>
            <person name="Davis P."/>
            <person name="Dougan G."/>
            <person name="Feltwell T."/>
            <person name="Hamlin N."/>
            <person name="Holroyd S."/>
            <person name="Jagels K."/>
            <person name="Karlyshev A.V."/>
            <person name="Leather S."/>
            <person name="Moule S."/>
            <person name="Oyston P.C.F."/>
            <person name="Quail M.A."/>
            <person name="Rutherford K.M."/>
            <person name="Simmonds M."/>
            <person name="Skelton J."/>
            <person name="Stevens K."/>
            <person name="Whitehead S."/>
            <person name="Barrell B.G."/>
        </authorList>
    </citation>
    <scope>NUCLEOTIDE SEQUENCE [LARGE SCALE GENOMIC DNA]</scope>
    <source>
        <strain>CO-92 / Biovar Orientalis</strain>
    </source>
</reference>
<reference key="3">
    <citation type="journal article" date="2004" name="DNA Res.">
        <title>Complete genome sequence of Yersinia pestis strain 91001, an isolate avirulent to humans.</title>
        <authorList>
            <person name="Song Y."/>
            <person name="Tong Z."/>
            <person name="Wang J."/>
            <person name="Wang L."/>
            <person name="Guo Z."/>
            <person name="Han Y."/>
            <person name="Zhang J."/>
            <person name="Pei D."/>
            <person name="Zhou D."/>
            <person name="Qin H."/>
            <person name="Pang X."/>
            <person name="Han Y."/>
            <person name="Zhai J."/>
            <person name="Li M."/>
            <person name="Cui B."/>
            <person name="Qi Z."/>
            <person name="Jin L."/>
            <person name="Dai R."/>
            <person name="Chen F."/>
            <person name="Li S."/>
            <person name="Ye C."/>
            <person name="Du Z."/>
            <person name="Lin W."/>
            <person name="Wang J."/>
            <person name="Yu J."/>
            <person name="Yang H."/>
            <person name="Wang J."/>
            <person name="Huang P."/>
            <person name="Yang R."/>
        </authorList>
    </citation>
    <scope>NUCLEOTIDE SEQUENCE [LARGE SCALE GENOMIC DNA]</scope>
    <source>
        <strain>91001 / Biovar Mediaevalis</strain>
    </source>
</reference>
<name>YEGS_YERPE</name>
<organism>
    <name type="scientific">Yersinia pestis</name>
    <dbReference type="NCBI Taxonomy" id="632"/>
    <lineage>
        <taxon>Bacteria</taxon>
        <taxon>Pseudomonadati</taxon>
        <taxon>Pseudomonadota</taxon>
        <taxon>Gammaproteobacteria</taxon>
        <taxon>Enterobacterales</taxon>
        <taxon>Yersiniaceae</taxon>
        <taxon>Yersinia</taxon>
    </lineage>
</organism>
<dbReference type="EC" id="2.7.1.-" evidence="1"/>
<dbReference type="EMBL" id="AE009952">
    <property type="protein sequence ID" value="AAM84951.1"/>
    <property type="molecule type" value="Genomic_DNA"/>
</dbReference>
<dbReference type="EMBL" id="AL590842">
    <property type="protein sequence ID" value="CAL21467.1"/>
    <property type="molecule type" value="Genomic_DNA"/>
</dbReference>
<dbReference type="EMBL" id="AE017042">
    <property type="protein sequence ID" value="AAS62911.1"/>
    <property type="molecule type" value="Genomic_DNA"/>
</dbReference>
<dbReference type="PIR" id="AH0347">
    <property type="entry name" value="AH0347"/>
</dbReference>
<dbReference type="RefSeq" id="YP_002347792.1">
    <property type="nucleotide sequence ID" value="NC_003143.1"/>
</dbReference>
<dbReference type="SMR" id="Q7CJL3"/>
<dbReference type="STRING" id="214092.YPO2856"/>
<dbReference type="PaxDb" id="214092-YPO2856"/>
<dbReference type="DNASU" id="1146325"/>
<dbReference type="EnsemblBacteria" id="AAS62911">
    <property type="protein sequence ID" value="AAS62911"/>
    <property type="gene ID" value="YP_2722"/>
</dbReference>
<dbReference type="KEGG" id="ype:YPO2856"/>
<dbReference type="KEGG" id="ypk:y1378"/>
<dbReference type="KEGG" id="ypm:YP_2722"/>
<dbReference type="PATRIC" id="fig|214092.21.peg.3300"/>
<dbReference type="eggNOG" id="COG1597">
    <property type="taxonomic scope" value="Bacteria"/>
</dbReference>
<dbReference type="HOGENOM" id="CLU_045532_1_1_6"/>
<dbReference type="OMA" id="YFMNIAA"/>
<dbReference type="OrthoDB" id="142078at2"/>
<dbReference type="Proteomes" id="UP000000815">
    <property type="component" value="Chromosome"/>
</dbReference>
<dbReference type="Proteomes" id="UP000001019">
    <property type="component" value="Chromosome"/>
</dbReference>
<dbReference type="Proteomes" id="UP000002490">
    <property type="component" value="Chromosome"/>
</dbReference>
<dbReference type="GO" id="GO:0005737">
    <property type="term" value="C:cytoplasm"/>
    <property type="evidence" value="ECO:0007669"/>
    <property type="project" value="UniProtKB-SubCell"/>
</dbReference>
<dbReference type="GO" id="GO:0005524">
    <property type="term" value="F:ATP binding"/>
    <property type="evidence" value="ECO:0007669"/>
    <property type="project" value="UniProtKB-UniRule"/>
</dbReference>
<dbReference type="GO" id="GO:0001727">
    <property type="term" value="F:lipid kinase activity"/>
    <property type="evidence" value="ECO:0007669"/>
    <property type="project" value="UniProtKB-UniRule"/>
</dbReference>
<dbReference type="GO" id="GO:0000287">
    <property type="term" value="F:magnesium ion binding"/>
    <property type="evidence" value="ECO:0007669"/>
    <property type="project" value="UniProtKB-UniRule"/>
</dbReference>
<dbReference type="GO" id="GO:0008654">
    <property type="term" value="P:phospholipid biosynthetic process"/>
    <property type="evidence" value="ECO:0007669"/>
    <property type="project" value="UniProtKB-UniRule"/>
</dbReference>
<dbReference type="Gene3D" id="2.60.200.40">
    <property type="match status" value="1"/>
</dbReference>
<dbReference type="Gene3D" id="3.40.50.10330">
    <property type="entry name" value="Probable inorganic polyphosphate/atp-NAD kinase, domain 1"/>
    <property type="match status" value="1"/>
</dbReference>
<dbReference type="HAMAP" id="MF_01377">
    <property type="entry name" value="YegS"/>
    <property type="match status" value="1"/>
</dbReference>
<dbReference type="InterPro" id="IPR017438">
    <property type="entry name" value="ATP-NAD_kinase_N"/>
</dbReference>
<dbReference type="InterPro" id="IPR005218">
    <property type="entry name" value="Diacylglycerol/lipid_kinase"/>
</dbReference>
<dbReference type="InterPro" id="IPR001206">
    <property type="entry name" value="Diacylglycerol_kinase_cat_dom"/>
</dbReference>
<dbReference type="InterPro" id="IPR022433">
    <property type="entry name" value="Lip_kinase_YegS"/>
</dbReference>
<dbReference type="InterPro" id="IPR050187">
    <property type="entry name" value="Lipid_Phosphate_FormReg"/>
</dbReference>
<dbReference type="InterPro" id="IPR016064">
    <property type="entry name" value="NAD/diacylglycerol_kinase_sf"/>
</dbReference>
<dbReference type="InterPro" id="IPR045540">
    <property type="entry name" value="YegS/DAGK_C"/>
</dbReference>
<dbReference type="NCBIfam" id="TIGR03702">
    <property type="entry name" value="lip_kinase_YegS"/>
    <property type="match status" value="1"/>
</dbReference>
<dbReference type="NCBIfam" id="NF009602">
    <property type="entry name" value="PRK13054.1"/>
    <property type="match status" value="1"/>
</dbReference>
<dbReference type="NCBIfam" id="TIGR00147">
    <property type="entry name" value="YegS/Rv2252/BmrU family lipid kinase"/>
    <property type="match status" value="1"/>
</dbReference>
<dbReference type="PANTHER" id="PTHR12358:SF106">
    <property type="entry name" value="LIPID KINASE YEGS"/>
    <property type="match status" value="1"/>
</dbReference>
<dbReference type="PANTHER" id="PTHR12358">
    <property type="entry name" value="SPHINGOSINE KINASE"/>
    <property type="match status" value="1"/>
</dbReference>
<dbReference type="Pfam" id="PF00781">
    <property type="entry name" value="DAGK_cat"/>
    <property type="match status" value="1"/>
</dbReference>
<dbReference type="Pfam" id="PF19279">
    <property type="entry name" value="YegS_C"/>
    <property type="match status" value="1"/>
</dbReference>
<dbReference type="SMART" id="SM00046">
    <property type="entry name" value="DAGKc"/>
    <property type="match status" value="1"/>
</dbReference>
<dbReference type="SUPFAM" id="SSF111331">
    <property type="entry name" value="NAD kinase/diacylglycerol kinase-like"/>
    <property type="match status" value="1"/>
</dbReference>
<dbReference type="PROSITE" id="PS50146">
    <property type="entry name" value="DAGK"/>
    <property type="match status" value="1"/>
</dbReference>
<accession>Q7CJL3</accession>
<accession>Q74SA0</accession>
<protein>
    <recommendedName>
        <fullName evidence="1">Probable lipid kinase YegS-like</fullName>
        <ecNumber evidence="1">2.7.1.-</ecNumber>
    </recommendedName>
</protein>
<feature type="chain" id="PRO_0000292171" description="Probable lipid kinase YegS-like">
    <location>
        <begin position="1"/>
        <end position="296"/>
    </location>
</feature>
<feature type="domain" description="DAGKc" evidence="1">
    <location>
        <begin position="1"/>
        <end position="130"/>
    </location>
</feature>
<feature type="active site" description="Proton acceptor" evidence="1">
    <location>
        <position position="268"/>
    </location>
</feature>
<feature type="binding site" evidence="1">
    <location>
        <position position="37"/>
    </location>
    <ligand>
        <name>ATP</name>
        <dbReference type="ChEBI" id="CHEBI:30616"/>
    </ligand>
</feature>
<feature type="binding site" evidence="1">
    <location>
        <begin position="63"/>
        <end position="69"/>
    </location>
    <ligand>
        <name>ATP</name>
        <dbReference type="ChEBI" id="CHEBI:30616"/>
    </ligand>
</feature>
<feature type="binding site" evidence="1">
    <location>
        <position position="92"/>
    </location>
    <ligand>
        <name>ATP</name>
        <dbReference type="ChEBI" id="CHEBI:30616"/>
    </ligand>
</feature>
<feature type="binding site" evidence="1">
    <location>
        <position position="212"/>
    </location>
    <ligand>
        <name>Mg(2+)</name>
        <dbReference type="ChEBI" id="CHEBI:18420"/>
    </ligand>
</feature>
<feature type="binding site" evidence="1">
    <location>
        <position position="215"/>
    </location>
    <ligand>
        <name>Mg(2+)</name>
        <dbReference type="ChEBI" id="CHEBI:18420"/>
    </ligand>
</feature>
<feature type="binding site" evidence="1">
    <location>
        <position position="217"/>
    </location>
    <ligand>
        <name>Mg(2+)</name>
        <dbReference type="ChEBI" id="CHEBI:18420"/>
    </ligand>
</feature>
<comment type="function">
    <text evidence="1">Probably phosphorylates lipids; the in vivo substrate is unknown.</text>
</comment>
<comment type="cofactor">
    <cofactor evidence="1">
        <name>Mg(2+)</name>
        <dbReference type="ChEBI" id="CHEBI:18420"/>
    </cofactor>
    <cofactor evidence="1">
        <name>Ca(2+)</name>
        <dbReference type="ChEBI" id="CHEBI:29108"/>
    </cofactor>
    <text evidence="1">Binds 1 Mg(2+) ion per subunit. Ca(2+) may be able to substitute.</text>
</comment>
<comment type="subcellular location">
    <subcellularLocation>
        <location evidence="1">Cytoplasm</location>
    </subcellularLocation>
</comment>
<comment type="similarity">
    <text evidence="1">Belongs to the diacylglycerol/lipid kinase family. YegS lipid kinase subfamily.</text>
</comment>
<gene>
    <name type="ordered locus">YPO2856</name>
    <name type="ordered locus">y1378</name>
    <name type="ordered locus">YP_2722</name>
</gene>
<keyword id="KW-0067">ATP-binding</keyword>
<keyword id="KW-0963">Cytoplasm</keyword>
<keyword id="KW-0418">Kinase</keyword>
<keyword id="KW-0444">Lipid biosynthesis</keyword>
<keyword id="KW-0443">Lipid metabolism</keyword>
<keyword id="KW-0460">Magnesium</keyword>
<keyword id="KW-0479">Metal-binding</keyword>
<keyword id="KW-0547">Nucleotide-binding</keyword>
<keyword id="KW-0594">Phospholipid biosynthesis</keyword>
<keyword id="KW-1208">Phospholipid metabolism</keyword>
<keyword id="KW-1185">Reference proteome</keyword>
<keyword id="KW-0808">Transferase</keyword>
<evidence type="ECO:0000255" key="1">
    <source>
        <dbReference type="HAMAP-Rule" id="MF_01377"/>
    </source>
</evidence>